<accession>P14159</accession>
<keyword id="KW-0217">Developmental protein</keyword>
<keyword id="KW-0238">DNA-binding</keyword>
<keyword id="KW-0371">Homeobox</keyword>
<keyword id="KW-0539">Nucleus</keyword>
<keyword id="KW-1185">Reference proteome</keyword>
<keyword id="KW-0804">Transcription</keyword>
<keyword id="KW-0805">Transcription regulation</keyword>
<reference key="1">
    <citation type="journal article" date="1988" name="Gene">
        <title>Molecular cloning and characterization of ovine homeo-box-containing genes.</title>
        <authorList>
            <person name="Choi C.-L."/>
            <person name="Hudson P."/>
            <person name="Stauder A."/>
            <person name="Pietersz G."/>
            <person name="Brandon M."/>
        </authorList>
    </citation>
    <scope>NUCLEOTIDE SEQUENCE [GENOMIC DNA]</scope>
</reference>
<organism>
    <name type="scientific">Ovis aries</name>
    <name type="common">Sheep</name>
    <dbReference type="NCBI Taxonomy" id="9940"/>
    <lineage>
        <taxon>Eukaryota</taxon>
        <taxon>Metazoa</taxon>
        <taxon>Chordata</taxon>
        <taxon>Craniata</taxon>
        <taxon>Vertebrata</taxon>
        <taxon>Euteleostomi</taxon>
        <taxon>Mammalia</taxon>
        <taxon>Eutheria</taxon>
        <taxon>Laurasiatheria</taxon>
        <taxon>Artiodactyla</taxon>
        <taxon>Ruminantia</taxon>
        <taxon>Pecora</taxon>
        <taxon>Bovidae</taxon>
        <taxon>Caprinae</taxon>
        <taxon>Ovis</taxon>
    </lineage>
</organism>
<sequence length="46" mass="5628">VNSNYTGGEPKRSRTAYTRQQVLELEKEFLFNRYLTRRRRIQHTLT</sequence>
<comment type="function">
    <text evidence="1">Sequence-specific transcription factor which is part of a developmental regulatory system that provides cells with specific positional identities on the anterior-posterior axis.</text>
</comment>
<comment type="subunit">
    <text evidence="2">Forms a DNA-binding heterodimer with transcription factor PBX1.</text>
</comment>
<comment type="subcellular location">
    <subcellularLocation>
        <location evidence="3">Nucleus</location>
    </subcellularLocation>
</comment>
<comment type="similarity">
    <text evidence="4">Belongs to the Antp homeobox family. Deformed subfamily.</text>
</comment>
<protein>
    <recommendedName>
        <fullName>Homeobox protein Hox-D4</fullName>
    </recommendedName>
    <alternativeName>
        <fullName>Homeobox protein Hox-8.1</fullName>
        <shortName>OHox-8.1</shortName>
    </alternativeName>
</protein>
<dbReference type="EMBL" id="M29539">
    <property type="protein sequence ID" value="AAA31539.1"/>
    <property type="molecule type" value="Genomic_DNA"/>
</dbReference>
<dbReference type="PIR" id="B30474">
    <property type="entry name" value="B30474"/>
</dbReference>
<dbReference type="SMR" id="P14159"/>
<dbReference type="Proteomes" id="UP000002356">
    <property type="component" value="Unplaced"/>
</dbReference>
<dbReference type="GO" id="GO:0005654">
    <property type="term" value="C:nucleoplasm"/>
    <property type="evidence" value="ECO:0007669"/>
    <property type="project" value="TreeGrafter"/>
</dbReference>
<dbReference type="GO" id="GO:0000981">
    <property type="term" value="F:DNA-binding transcription factor activity, RNA polymerase II-specific"/>
    <property type="evidence" value="ECO:0007669"/>
    <property type="project" value="TreeGrafter"/>
</dbReference>
<dbReference type="GO" id="GO:0000978">
    <property type="term" value="F:RNA polymerase II cis-regulatory region sequence-specific DNA binding"/>
    <property type="evidence" value="ECO:0007669"/>
    <property type="project" value="TreeGrafter"/>
</dbReference>
<dbReference type="GO" id="GO:0009952">
    <property type="term" value="P:anterior/posterior pattern specification"/>
    <property type="evidence" value="ECO:0007669"/>
    <property type="project" value="TreeGrafter"/>
</dbReference>
<dbReference type="GO" id="GO:0048704">
    <property type="term" value="P:embryonic skeletal system morphogenesis"/>
    <property type="evidence" value="ECO:0007669"/>
    <property type="project" value="TreeGrafter"/>
</dbReference>
<dbReference type="GO" id="GO:0045944">
    <property type="term" value="P:positive regulation of transcription by RNA polymerase II"/>
    <property type="evidence" value="ECO:0007669"/>
    <property type="project" value="TreeGrafter"/>
</dbReference>
<dbReference type="CDD" id="cd00086">
    <property type="entry name" value="homeodomain"/>
    <property type="match status" value="1"/>
</dbReference>
<dbReference type="Gene3D" id="1.10.10.60">
    <property type="entry name" value="Homeodomain-like"/>
    <property type="match status" value="1"/>
</dbReference>
<dbReference type="InterPro" id="IPR050609">
    <property type="entry name" value="Antp_homeobox_Deformed_sf"/>
</dbReference>
<dbReference type="InterPro" id="IPR001356">
    <property type="entry name" value="HD"/>
</dbReference>
<dbReference type="InterPro" id="IPR009057">
    <property type="entry name" value="Homeodomain-like_sf"/>
</dbReference>
<dbReference type="PANTHER" id="PTHR45771:SF5">
    <property type="entry name" value="HOMEOBOX PROTEIN HOX-D4"/>
    <property type="match status" value="1"/>
</dbReference>
<dbReference type="PANTHER" id="PTHR45771">
    <property type="entry name" value="HOMEOTIC PROTEIN DEFORMED"/>
    <property type="match status" value="1"/>
</dbReference>
<dbReference type="Pfam" id="PF00046">
    <property type="entry name" value="Homeodomain"/>
    <property type="match status" value="1"/>
</dbReference>
<dbReference type="SUPFAM" id="SSF46689">
    <property type="entry name" value="Homeodomain-like"/>
    <property type="match status" value="1"/>
</dbReference>
<dbReference type="PROSITE" id="PS50071">
    <property type="entry name" value="HOMEOBOX_2"/>
    <property type="match status" value="1"/>
</dbReference>
<evidence type="ECO:0000250" key="1"/>
<evidence type="ECO:0000250" key="2">
    <source>
        <dbReference type="UniProtKB" id="P09016"/>
    </source>
</evidence>
<evidence type="ECO:0000255" key="3">
    <source>
        <dbReference type="PROSITE-ProRule" id="PRU00108"/>
    </source>
</evidence>
<evidence type="ECO:0000305" key="4"/>
<name>HXD4_SHEEP</name>
<proteinExistence type="inferred from homology"/>
<feature type="chain" id="PRO_0000200212" description="Homeobox protein Hox-D4">
    <location>
        <begin position="1" status="less than"/>
        <end position="46" status="greater than"/>
    </location>
</feature>
<feature type="DNA-binding region" description="Homeobox" evidence="3">
    <location>
        <begin position="1" status="less than"/>
        <end position="46" status="greater than"/>
    </location>
</feature>
<feature type="non-terminal residue">
    <location>
        <position position="1"/>
    </location>
</feature>
<feature type="non-terminal residue">
    <location>
        <position position="46"/>
    </location>
</feature>
<gene>
    <name type="primary">HOXD4</name>
    <name type="synonym">HOX-8.1</name>
</gene>